<protein>
    <recommendedName>
        <fullName evidence="2 6">Lipid II isoglutaminyl synthase (glutamine-hydrolyzing) subunit MurT</fullName>
        <ecNumber evidence="2 3 4">6.3.5.13</ecNumber>
    </recommendedName>
</protein>
<name>MURT_STRR6</name>
<reference key="1">
    <citation type="journal article" date="2001" name="J. Bacteriol.">
        <title>Genome of the bacterium Streptococcus pneumoniae strain R6.</title>
        <authorList>
            <person name="Hoskins J."/>
            <person name="Alborn W.E. Jr."/>
            <person name="Arnold J."/>
            <person name="Blaszczak L.C."/>
            <person name="Burgett S."/>
            <person name="DeHoff B.S."/>
            <person name="Estrem S.T."/>
            <person name="Fritz L."/>
            <person name="Fu D.-J."/>
            <person name="Fuller W."/>
            <person name="Geringer C."/>
            <person name="Gilmour R."/>
            <person name="Glass J.S."/>
            <person name="Khoja H."/>
            <person name="Kraft A.R."/>
            <person name="Lagace R.E."/>
            <person name="LeBlanc D.J."/>
            <person name="Lee L.N."/>
            <person name="Lefkowitz E.J."/>
            <person name="Lu J."/>
            <person name="Matsushima P."/>
            <person name="McAhren S.M."/>
            <person name="McHenney M."/>
            <person name="McLeaster K."/>
            <person name="Mundy C.W."/>
            <person name="Nicas T.I."/>
            <person name="Norris F.H."/>
            <person name="O'Gara M."/>
            <person name="Peery R.B."/>
            <person name="Robertson G.T."/>
            <person name="Rockey P."/>
            <person name="Sun P.-M."/>
            <person name="Winkler M.E."/>
            <person name="Yang Y."/>
            <person name="Young-Bellido M."/>
            <person name="Zhao G."/>
            <person name="Zook C.A."/>
            <person name="Baltz R.H."/>
            <person name="Jaskunas S.R."/>
            <person name="Rosteck P.R. Jr."/>
            <person name="Skatrud P.L."/>
            <person name="Glass J.I."/>
        </authorList>
    </citation>
    <scope>NUCLEOTIDE SEQUENCE [LARGE SCALE GENOMIC DNA]</scope>
    <source>
        <strain>ATCC BAA-255 / R6</strain>
    </source>
</reference>
<reference key="2">
    <citation type="journal article" date="2013" name="ACS Chem. Biol.">
        <title>In vitro reconstitution of peptidoglycan assembly from the Gram-positive pathogen Streptococcus pneumoniae.</title>
        <authorList>
            <person name="Zapun A."/>
            <person name="Philippe J."/>
            <person name="Abrahams K.A."/>
            <person name="Signor L."/>
            <person name="Roper D.I."/>
            <person name="Breukink E."/>
            <person name="Vernet T."/>
        </authorList>
    </citation>
    <scope>FUNCTION</scope>
    <scope>CATALYTIC ACTIVITY</scope>
    <scope>PATHWAY</scope>
    <source>
        <strain>ATCC BAA-255 / R6</strain>
    </source>
</reference>
<reference evidence="8" key="3">
    <citation type="journal article" date="2018" name="Nat. Commun.">
        <title>Structure of the essential peptidoglycan amidotransferase MurT/GatD complex from Streptococcus pneumoniae.</title>
        <authorList>
            <person name="Morlot C."/>
            <person name="Straume D."/>
            <person name="Peters K."/>
            <person name="Hegnar O.A."/>
            <person name="Simon N."/>
            <person name="Villard A.M."/>
            <person name="Contreras-Martel C."/>
            <person name="Leisico F."/>
            <person name="Breukink E."/>
            <person name="Gravier-Pelletier C."/>
            <person name="Le Corre L."/>
            <person name="Vollmer W."/>
            <person name="Pietrancosta N."/>
            <person name="Havarstein L.S."/>
            <person name="Zapun A."/>
        </authorList>
    </citation>
    <scope>X-RAY CRYSTALLOGRAPHY (3.00 ANGSTROMS) IN COMPLEX WITH GATD AND GLUTAMINE</scope>
    <scope>FUNCTION</scope>
    <scope>CATALYTIC ACTIVITY</scope>
    <scope>BIOPHYSICOCHEMICAL PROPERTIES</scope>
    <scope>SUBUNIT</scope>
    <scope>DISRUPTION PHENOTYPE</scope>
    <scope>MUTAGENESIS OF LYS-59; ASN-85; ASP-136; ASP-139; ARG-140; GLU-143 AND ASP-355</scope>
</reference>
<accession>Q8DNZ9</accession>
<proteinExistence type="evidence at protein level"/>
<organism>
    <name type="scientific">Streptococcus pneumoniae (strain ATCC BAA-255 / R6)</name>
    <dbReference type="NCBI Taxonomy" id="171101"/>
    <lineage>
        <taxon>Bacteria</taxon>
        <taxon>Bacillati</taxon>
        <taxon>Bacillota</taxon>
        <taxon>Bacilli</taxon>
        <taxon>Lactobacillales</taxon>
        <taxon>Streptococcaceae</taxon>
        <taxon>Streptococcus</taxon>
    </lineage>
</organism>
<evidence type="ECO:0000250" key="1">
    <source>
        <dbReference type="UniProtKB" id="A0A0H3JUU7"/>
    </source>
</evidence>
<evidence type="ECO:0000255" key="2">
    <source>
        <dbReference type="HAMAP-Rule" id="MF_02214"/>
    </source>
</evidence>
<evidence type="ECO:0000269" key="3">
    <source>
    </source>
</evidence>
<evidence type="ECO:0000269" key="4">
    <source>
    </source>
</evidence>
<evidence type="ECO:0000303" key="5">
    <source>
    </source>
</evidence>
<evidence type="ECO:0000305" key="6"/>
<evidence type="ECO:0000312" key="7">
    <source>
        <dbReference type="EMBL" id="AAL00247.1"/>
    </source>
</evidence>
<evidence type="ECO:0007744" key="8">
    <source>
        <dbReference type="PDB" id="6FQB"/>
    </source>
</evidence>
<evidence type="ECO:0007829" key="9">
    <source>
        <dbReference type="PDB" id="6FQB"/>
    </source>
</evidence>
<keyword id="KW-0002">3D-structure</keyword>
<keyword id="KW-0067">ATP-binding</keyword>
<keyword id="KW-0133">Cell shape</keyword>
<keyword id="KW-0961">Cell wall biogenesis/degradation</keyword>
<keyword id="KW-0436">Ligase</keyword>
<keyword id="KW-0479">Metal-binding</keyword>
<keyword id="KW-0547">Nucleotide-binding</keyword>
<keyword id="KW-0573">Peptidoglycan synthesis</keyword>
<keyword id="KW-1185">Reference proteome</keyword>
<keyword id="KW-0862">Zinc</keyword>
<feature type="chain" id="PRO_0000446945" description="Lipid II isoglutaminyl synthase (glutamine-hydrolyzing) subunit MurT">
    <location>
        <begin position="1"/>
        <end position="447"/>
    </location>
</feature>
<feature type="active site" evidence="1 2">
    <location>
        <position position="355"/>
    </location>
</feature>
<feature type="binding site" evidence="1 2">
    <location>
        <position position="205"/>
    </location>
    <ligand>
        <name>Zn(2+)</name>
        <dbReference type="ChEBI" id="CHEBI:29105"/>
    </ligand>
</feature>
<feature type="binding site" evidence="1 2">
    <location>
        <position position="208"/>
    </location>
    <ligand>
        <name>Zn(2+)</name>
        <dbReference type="ChEBI" id="CHEBI:29105"/>
    </ligand>
</feature>
<feature type="binding site" evidence="1 2">
    <location>
        <position position="227"/>
    </location>
    <ligand>
        <name>Zn(2+)</name>
        <dbReference type="ChEBI" id="CHEBI:29105"/>
    </ligand>
</feature>
<feature type="binding site" evidence="1 2">
    <location>
        <position position="230"/>
    </location>
    <ligand>
        <name>Zn(2+)</name>
        <dbReference type="ChEBI" id="CHEBI:29105"/>
    </ligand>
</feature>
<feature type="mutagenesis site" description="Loss of activity." evidence="4">
    <original>K</original>
    <variation>A</variation>
    <location>
        <position position="59"/>
    </location>
</feature>
<feature type="mutagenesis site" description="Loss of activity." evidence="4">
    <original>N</original>
    <variation>A</variation>
    <location>
        <position position="85"/>
    </location>
</feature>
<feature type="mutagenesis site" description="Strong decrease in activity." evidence="4">
    <original>D</original>
    <variation>A</variation>
    <location>
        <position position="136"/>
    </location>
</feature>
<feature type="mutagenesis site" description="Slight decrease in activity." evidence="4">
    <original>D</original>
    <variation>A</variation>
    <location>
        <position position="139"/>
    </location>
</feature>
<feature type="mutagenesis site" description="Strong decrease in activity." evidence="4">
    <original>R</original>
    <variation>A</variation>
    <location>
        <position position="140"/>
    </location>
</feature>
<feature type="mutagenesis site" description="No change in activity." evidence="4">
    <original>E</original>
    <variation>A</variation>
    <location>
        <position position="143"/>
    </location>
</feature>
<feature type="mutagenesis site" description="Decrease in activity." evidence="4">
    <original>D</original>
    <variation>A</variation>
    <location>
        <position position="355"/>
    </location>
</feature>
<feature type="strand" evidence="9">
    <location>
        <begin position="48"/>
        <end position="54"/>
    </location>
</feature>
<feature type="helix" evidence="9">
    <location>
        <begin position="59"/>
        <end position="74"/>
    </location>
</feature>
<feature type="helix" evidence="9">
    <location>
        <begin position="89"/>
        <end position="92"/>
    </location>
</feature>
<feature type="strand" evidence="9">
    <location>
        <begin position="106"/>
        <end position="110"/>
    </location>
</feature>
<feature type="turn" evidence="9">
    <location>
        <begin position="113"/>
        <end position="115"/>
    </location>
</feature>
<feature type="helix" evidence="9">
    <location>
        <begin position="116"/>
        <end position="119"/>
    </location>
</feature>
<feature type="turn" evidence="9">
    <location>
        <begin position="120"/>
        <end position="122"/>
    </location>
</feature>
<feature type="strand" evidence="9">
    <location>
        <begin position="126"/>
        <end position="130"/>
    </location>
</feature>
<feature type="helix" evidence="9">
    <location>
        <begin position="144"/>
        <end position="156"/>
    </location>
</feature>
<feature type="strand" evidence="9">
    <location>
        <begin position="162"/>
        <end position="166"/>
    </location>
</feature>
<feature type="strand" evidence="9">
    <location>
        <begin position="172"/>
        <end position="174"/>
    </location>
</feature>
<feature type="strand" evidence="9">
    <location>
        <begin position="176"/>
        <end position="179"/>
    </location>
</feature>
<feature type="strand" evidence="9">
    <location>
        <begin position="181"/>
        <end position="186"/>
    </location>
</feature>
<feature type="turn" evidence="9">
    <location>
        <begin position="206"/>
        <end position="208"/>
    </location>
</feature>
<feature type="strand" evidence="9">
    <location>
        <begin position="213"/>
        <end position="217"/>
    </location>
</feature>
<feature type="strand" evidence="9">
    <location>
        <begin position="223"/>
        <end position="226"/>
    </location>
</feature>
<feature type="turn" evidence="9">
    <location>
        <begin position="228"/>
        <end position="230"/>
    </location>
</feature>
<feature type="strand" evidence="9">
    <location>
        <begin position="238"/>
        <end position="247"/>
    </location>
</feature>
<feature type="strand" evidence="9">
    <location>
        <begin position="252"/>
        <end position="256"/>
    </location>
</feature>
<feature type="strand" evidence="9">
    <location>
        <begin position="259"/>
        <end position="265"/>
    </location>
</feature>
<feature type="helix" evidence="9">
    <location>
        <begin position="269"/>
        <end position="283"/>
    </location>
</feature>
<feature type="helix" evidence="9">
    <location>
        <begin position="288"/>
        <end position="298"/>
    </location>
</feature>
<feature type="helix" evidence="9">
    <location>
        <begin position="299"/>
        <end position="302"/>
    </location>
</feature>
<feature type="strand" evidence="9">
    <location>
        <begin position="307"/>
        <end position="310"/>
    </location>
</feature>
<feature type="strand" evidence="9">
    <location>
        <begin position="313"/>
        <end position="319"/>
    </location>
</feature>
<feature type="helix" evidence="9">
    <location>
        <begin position="323"/>
        <end position="333"/>
    </location>
</feature>
<feature type="strand" evidence="9">
    <location>
        <begin position="340"/>
        <end position="345"/>
    </location>
</feature>
<feature type="turn" evidence="9">
    <location>
        <begin position="350"/>
        <end position="352"/>
    </location>
</feature>
<feature type="helix" evidence="9">
    <location>
        <begin position="356"/>
        <end position="360"/>
    </location>
</feature>
<feature type="helix" evidence="9">
    <location>
        <begin position="364"/>
        <end position="369"/>
    </location>
</feature>
<feature type="strand" evidence="9">
    <location>
        <begin position="375"/>
        <end position="379"/>
    </location>
</feature>
<feature type="helix" evidence="9">
    <location>
        <begin position="382"/>
        <end position="391"/>
    </location>
</feature>
<feature type="helix" evidence="9">
    <location>
        <begin position="396"/>
        <end position="398"/>
    </location>
</feature>
<feature type="strand" evidence="9">
    <location>
        <begin position="399"/>
        <end position="401"/>
    </location>
</feature>
<feature type="helix" evidence="9">
    <location>
        <begin position="405"/>
        <end position="413"/>
    </location>
</feature>
<feature type="strand" evidence="9">
    <location>
        <begin position="416"/>
        <end position="424"/>
    </location>
</feature>
<feature type="helix" evidence="9">
    <location>
        <begin position="426"/>
        <end position="432"/>
    </location>
</feature>
<comment type="function">
    <text evidence="3 4">The lipid II isoglutaminyl synthase complex catalyzes the formation of alpha-D-isoglutamine in the cell wall lipid II stem peptide (PubMed:24044435, PubMed:30093673). The MurT subunit catalyzes the ATP-dependent amidation of D-glutamate residue of lipid II, converting it to an isoglutamine residue (PubMed:30093673).</text>
</comment>
<comment type="catalytic activity">
    <reaction evidence="2 3 4">
        <text>beta-D-GlcNAc-(1-&gt;4)-Mur2Ac(oyl-L-Ala-gamma-D-Glu-L-Lys-D-Ala-D-Ala)-di-trans,octa-cis-undecaprenyl diphosphate + L-glutamine + ATP + H2O = beta-D-GlcNAc-(1-&gt;4)-Mur2Ac(oyl-L-Ala-D-isoglutaminyl-L-Lys-D-Ala-D-Ala)-di-trans,octa-cis-undecaprenyl diphosphate + L-glutamate + ADP + phosphate + H(+)</text>
        <dbReference type="Rhea" id="RHEA:57928"/>
        <dbReference type="ChEBI" id="CHEBI:15377"/>
        <dbReference type="ChEBI" id="CHEBI:15378"/>
        <dbReference type="ChEBI" id="CHEBI:29985"/>
        <dbReference type="ChEBI" id="CHEBI:30616"/>
        <dbReference type="ChEBI" id="CHEBI:43474"/>
        <dbReference type="ChEBI" id="CHEBI:58359"/>
        <dbReference type="ChEBI" id="CHEBI:60033"/>
        <dbReference type="ChEBI" id="CHEBI:62233"/>
        <dbReference type="ChEBI" id="CHEBI:456216"/>
        <dbReference type="EC" id="6.3.5.13"/>
    </reaction>
</comment>
<comment type="catalytic activity">
    <reaction evidence="2 4">
        <text>beta-D-GlcNAc-(1-&gt;4)-Mur2Ac(oyl-L-Ala-gamma-D-Glu-L-Lys-D-Ala-D-Ala)-di-trans,octa-cis-undecaprenyl diphosphate + ATP = beta-D-GlcNAc-(1-&gt;4)-Mur2Ac(oyl-L-Ala-gamma-D-O-P-Glu-L-Lys-D-Ala-D-Ala)-di-trans,octa-cis-undecaprenyl diphosphate + ADP</text>
        <dbReference type="Rhea" id="RHEA:59488"/>
        <dbReference type="ChEBI" id="CHEBI:30616"/>
        <dbReference type="ChEBI" id="CHEBI:60033"/>
        <dbReference type="ChEBI" id="CHEBI:143132"/>
        <dbReference type="ChEBI" id="CHEBI:456216"/>
    </reaction>
</comment>
<comment type="catalytic activity">
    <reaction evidence="2 4">
        <text>beta-D-GlcNAc-(1-&gt;4)-Mur2Ac(oyl-L-Ala-gamma-D-O-P-Glu-L-Lys-D-Ala-D-Ala)-di-trans,octa-cis-undecaprenyl diphosphate + NH4(+) = beta-D-GlcNAc-(1-&gt;4)-Mur2Ac(oyl-L-Ala-D-isoglutaminyl-L-Lys-D-Ala-D-Ala)-di-trans,octa-cis-undecaprenyl diphosphate + phosphate + H(+)</text>
        <dbReference type="Rhea" id="RHEA:57932"/>
        <dbReference type="ChEBI" id="CHEBI:15378"/>
        <dbReference type="ChEBI" id="CHEBI:28938"/>
        <dbReference type="ChEBI" id="CHEBI:43474"/>
        <dbReference type="ChEBI" id="CHEBI:62233"/>
        <dbReference type="ChEBI" id="CHEBI:143132"/>
    </reaction>
</comment>
<comment type="biophysicochemical properties">
    <kinetics>
        <KM evidence="4">220 uM for lipid II</KM>
        <KM evidence="4">16 uM for ATP</KM>
        <text evidence="4">kcat is 4 sec(-1) with lipid II as substrate.</text>
    </kinetics>
</comment>
<comment type="pathway">
    <text evidence="2 3">Cell wall biogenesis; peptidoglycan biosynthesis.</text>
</comment>
<comment type="subunit">
    <text evidence="2 4">Forms a heterodimer with GatD.</text>
</comment>
<comment type="disruption phenotype">
    <text evidence="4">Severe depletion of GatD/MurT produces a high proportion of aberrant cells, elongated or bulging.</text>
</comment>
<comment type="similarity">
    <text evidence="2 6">Belongs to the MurCDEF family. MurT subfamily.</text>
</comment>
<dbReference type="EC" id="6.3.5.13" evidence="2 3 4"/>
<dbReference type="EMBL" id="AE007317">
    <property type="protein sequence ID" value="AAL00247.1"/>
    <property type="molecule type" value="Genomic_DNA"/>
</dbReference>
<dbReference type="PIR" id="B98052">
    <property type="entry name" value="B98052"/>
</dbReference>
<dbReference type="RefSeq" id="NP_359036.1">
    <property type="nucleotide sequence ID" value="NC_003098.1"/>
</dbReference>
<dbReference type="RefSeq" id="WP_001050251.1">
    <property type="nucleotide sequence ID" value="NC_003098.1"/>
</dbReference>
<dbReference type="PDB" id="6FQB">
    <property type="method" value="X-ray"/>
    <property type="resolution" value="3.00 A"/>
    <property type="chains" value="A/B/C/D=1-447"/>
</dbReference>
<dbReference type="PDBsum" id="6FQB"/>
<dbReference type="SASBDB" id="Q8DNZ9"/>
<dbReference type="SMR" id="Q8DNZ9"/>
<dbReference type="STRING" id="171101.spr1443"/>
<dbReference type="KEGG" id="spr:spr1443"/>
<dbReference type="PATRIC" id="fig|171101.6.peg.1559"/>
<dbReference type="eggNOG" id="COG0770">
    <property type="taxonomic scope" value="Bacteria"/>
</dbReference>
<dbReference type="HOGENOM" id="CLU_041534_0_0_9"/>
<dbReference type="BRENDA" id="6.3.5.13">
    <property type="organism ID" value="1960"/>
</dbReference>
<dbReference type="UniPathway" id="UPA00219"/>
<dbReference type="Proteomes" id="UP000000586">
    <property type="component" value="Chromosome"/>
</dbReference>
<dbReference type="GO" id="GO:0016881">
    <property type="term" value="F:acid-amino acid ligase activity"/>
    <property type="evidence" value="ECO:0007669"/>
    <property type="project" value="InterPro"/>
</dbReference>
<dbReference type="GO" id="GO:0005524">
    <property type="term" value="F:ATP binding"/>
    <property type="evidence" value="ECO:0007669"/>
    <property type="project" value="UniProtKB-UniRule"/>
</dbReference>
<dbReference type="GO" id="GO:0140282">
    <property type="term" value="F:carbon-nitrogen ligase activity on lipid II"/>
    <property type="evidence" value="ECO:0007669"/>
    <property type="project" value="UniProtKB-UniRule"/>
</dbReference>
<dbReference type="GO" id="GO:0008270">
    <property type="term" value="F:zinc ion binding"/>
    <property type="evidence" value="ECO:0007669"/>
    <property type="project" value="UniProtKB-UniRule"/>
</dbReference>
<dbReference type="GO" id="GO:0071555">
    <property type="term" value="P:cell wall organization"/>
    <property type="evidence" value="ECO:0007669"/>
    <property type="project" value="UniProtKB-KW"/>
</dbReference>
<dbReference type="GO" id="GO:0009252">
    <property type="term" value="P:peptidoglycan biosynthetic process"/>
    <property type="evidence" value="ECO:0007669"/>
    <property type="project" value="UniProtKB-UniRule"/>
</dbReference>
<dbReference type="GO" id="GO:0008360">
    <property type="term" value="P:regulation of cell shape"/>
    <property type="evidence" value="ECO:0007669"/>
    <property type="project" value="UniProtKB-KW"/>
</dbReference>
<dbReference type="Gene3D" id="3.40.1190.10">
    <property type="entry name" value="Mur-like, catalytic domain"/>
    <property type="match status" value="1"/>
</dbReference>
<dbReference type="HAMAP" id="MF_02214">
    <property type="entry name" value="Lipid_II_synth_MurT"/>
    <property type="match status" value="1"/>
</dbReference>
<dbReference type="InterPro" id="IPR054853">
    <property type="entry name" value="isoglutsynth_MurT"/>
</dbReference>
<dbReference type="InterPro" id="IPR043703">
    <property type="entry name" value="Lipid_II_synth_MurT"/>
</dbReference>
<dbReference type="InterPro" id="IPR036565">
    <property type="entry name" value="Mur-like_cat_sf"/>
</dbReference>
<dbReference type="InterPro" id="IPR013221">
    <property type="entry name" value="Mur_ligase_cen"/>
</dbReference>
<dbReference type="InterPro" id="IPR013564">
    <property type="entry name" value="MurT_C"/>
</dbReference>
<dbReference type="NCBIfam" id="NF045635">
    <property type="entry name" value="isoglutsynth_MurT"/>
    <property type="match status" value="1"/>
</dbReference>
<dbReference type="PANTHER" id="PTHR23135:SF7">
    <property type="entry name" value="LIPID II ISOGLUTAMINYL SYNTHASE (GLUTAMINE-HYDROLYZING) SUBUNIT MURT"/>
    <property type="match status" value="1"/>
</dbReference>
<dbReference type="PANTHER" id="PTHR23135">
    <property type="entry name" value="MUR LIGASE FAMILY MEMBER"/>
    <property type="match status" value="1"/>
</dbReference>
<dbReference type="Pfam" id="PF08245">
    <property type="entry name" value="Mur_ligase_M"/>
    <property type="match status" value="1"/>
</dbReference>
<dbReference type="Pfam" id="PF08353">
    <property type="entry name" value="MurT_C"/>
    <property type="match status" value="1"/>
</dbReference>
<dbReference type="SUPFAM" id="SSF53623">
    <property type="entry name" value="MurD-like peptide ligases, catalytic domain"/>
    <property type="match status" value="1"/>
</dbReference>
<gene>
    <name evidence="2 5" type="primary">murT</name>
    <name evidence="7" type="ordered locus">spr1443</name>
</gene>
<sequence length="447" mass="49576">MNLKTTLGLLAGRSSHFVLSRLGRGSTLPGKVALQFDKDILQSLAKNYEIVVVTGTNGKTLTTALTVGILKEVYGQVLTNPSGANMITGIATTFLTAKSSKTGKNIAVLEIDEASLSRICDYIQPSLFVITNIFRDQMDRFGEIYTTYNMILDAIRKVPTATVLLNGDSPLFYKPTIPNPIEYFGFDLEKGPAQLAHYNTEGILCPDCQGILKYEHNTYANLGAYICEGCGCKRPDLDYRLTKLVELTNNRSRFVIDGQEYGIQIGGLYNIYNALAAVAIARFLGADSQLIKQGFDKSRAVFGRQETFHIGDKECTLVLIKNPVGATQAIEMIKLAPYPFSLSVLLNANYADGIDTSWIWDADFEQITDMDIPEINAGGVRHSEIARRLRVTGYPAEKITETSNLEQVLKTIENQDCKHAYILATYTAMLEFRELLASRQIVRKEMN</sequence>